<sequence length="428" mass="47847">MEILMASSNLIKQLQERGLVAQVTDEDALAERLAQGPIALYCGFDPTADSLHLGHLVPLLCLKRFQQAGHKPVALVGGATGLIGDPSFKAAERKLNTEETVQEWVAKIRKQVAPFLDFDCGENSAIAANNYDWFGSMNVLTFLRDIGKHFSVNQMINKEAVKQRLNRDDQGISFTEFSYNLLQGYDFACLNKLHGVALQIGGSDQWGNITSGIDLTRRLHQNQVFGLTVPLITKADGTKFGKTEGGAVWLDPKKTSPYKFYQFWINTADADVYRFLKFFTFMDIEEINALEEEDKNSGKAPRAQYVLAEQVTRLVHGEEGLIAAKRITESLFNGSLGELSEADFEQLAQDGVPMIELEKGTDLMQALVDAELQPSRGQARKTIASNAVTINGEKQSDPEYIFNDEDRLFGRYTLLRRGKKNYCLICWK</sequence>
<proteinExistence type="inferred from homology"/>
<dbReference type="EC" id="6.1.1.1" evidence="1"/>
<dbReference type="EMBL" id="CP000880">
    <property type="protein sequence ID" value="ABX21429.1"/>
    <property type="molecule type" value="Genomic_DNA"/>
</dbReference>
<dbReference type="SMR" id="A9MEH2"/>
<dbReference type="STRING" id="41514.SARI_01533"/>
<dbReference type="KEGG" id="ses:SARI_01533"/>
<dbReference type="HOGENOM" id="CLU_024003_0_3_6"/>
<dbReference type="Proteomes" id="UP000002084">
    <property type="component" value="Chromosome"/>
</dbReference>
<dbReference type="GO" id="GO:0005829">
    <property type="term" value="C:cytosol"/>
    <property type="evidence" value="ECO:0007669"/>
    <property type="project" value="TreeGrafter"/>
</dbReference>
<dbReference type="GO" id="GO:0005524">
    <property type="term" value="F:ATP binding"/>
    <property type="evidence" value="ECO:0007669"/>
    <property type="project" value="UniProtKB-UniRule"/>
</dbReference>
<dbReference type="GO" id="GO:0003723">
    <property type="term" value="F:RNA binding"/>
    <property type="evidence" value="ECO:0007669"/>
    <property type="project" value="UniProtKB-KW"/>
</dbReference>
<dbReference type="GO" id="GO:0004831">
    <property type="term" value="F:tyrosine-tRNA ligase activity"/>
    <property type="evidence" value="ECO:0007669"/>
    <property type="project" value="UniProtKB-UniRule"/>
</dbReference>
<dbReference type="GO" id="GO:0006437">
    <property type="term" value="P:tyrosyl-tRNA aminoacylation"/>
    <property type="evidence" value="ECO:0007669"/>
    <property type="project" value="UniProtKB-UniRule"/>
</dbReference>
<dbReference type="CDD" id="cd00165">
    <property type="entry name" value="S4"/>
    <property type="match status" value="1"/>
</dbReference>
<dbReference type="CDD" id="cd00805">
    <property type="entry name" value="TyrRS_core"/>
    <property type="match status" value="1"/>
</dbReference>
<dbReference type="FunFam" id="1.10.240.10:FF:000001">
    <property type="entry name" value="Tyrosine--tRNA ligase"/>
    <property type="match status" value="1"/>
</dbReference>
<dbReference type="FunFam" id="3.10.290.10:FF:000007">
    <property type="entry name" value="Tyrosine--tRNA ligase"/>
    <property type="match status" value="1"/>
</dbReference>
<dbReference type="FunFam" id="3.40.50.620:FF:000008">
    <property type="entry name" value="Tyrosine--tRNA ligase"/>
    <property type="match status" value="1"/>
</dbReference>
<dbReference type="Gene3D" id="3.40.50.620">
    <property type="entry name" value="HUPs"/>
    <property type="match status" value="1"/>
</dbReference>
<dbReference type="Gene3D" id="3.10.290.10">
    <property type="entry name" value="RNA-binding S4 domain"/>
    <property type="match status" value="1"/>
</dbReference>
<dbReference type="Gene3D" id="1.10.240.10">
    <property type="entry name" value="Tyrosyl-Transfer RNA Synthetase"/>
    <property type="match status" value="1"/>
</dbReference>
<dbReference type="HAMAP" id="MF_02006">
    <property type="entry name" value="Tyr_tRNA_synth_type1"/>
    <property type="match status" value="1"/>
</dbReference>
<dbReference type="InterPro" id="IPR001412">
    <property type="entry name" value="aa-tRNA-synth_I_CS"/>
</dbReference>
<dbReference type="InterPro" id="IPR002305">
    <property type="entry name" value="aa-tRNA-synth_Ic"/>
</dbReference>
<dbReference type="InterPro" id="IPR014729">
    <property type="entry name" value="Rossmann-like_a/b/a_fold"/>
</dbReference>
<dbReference type="InterPro" id="IPR002942">
    <property type="entry name" value="S4_RNA-bd"/>
</dbReference>
<dbReference type="InterPro" id="IPR036986">
    <property type="entry name" value="S4_RNA-bd_sf"/>
</dbReference>
<dbReference type="InterPro" id="IPR054608">
    <property type="entry name" value="SYY-like_C"/>
</dbReference>
<dbReference type="InterPro" id="IPR002307">
    <property type="entry name" value="Tyr-tRNA-ligase"/>
</dbReference>
<dbReference type="InterPro" id="IPR024088">
    <property type="entry name" value="Tyr-tRNA-ligase_bac-type"/>
</dbReference>
<dbReference type="InterPro" id="IPR024107">
    <property type="entry name" value="Tyr-tRNA-ligase_bac_1"/>
</dbReference>
<dbReference type="NCBIfam" id="TIGR00234">
    <property type="entry name" value="tyrS"/>
    <property type="match status" value="1"/>
</dbReference>
<dbReference type="PANTHER" id="PTHR11766:SF0">
    <property type="entry name" value="TYROSINE--TRNA LIGASE, MITOCHONDRIAL"/>
    <property type="match status" value="1"/>
</dbReference>
<dbReference type="PANTHER" id="PTHR11766">
    <property type="entry name" value="TYROSYL-TRNA SYNTHETASE"/>
    <property type="match status" value="1"/>
</dbReference>
<dbReference type="Pfam" id="PF22421">
    <property type="entry name" value="SYY_C-terminal"/>
    <property type="match status" value="1"/>
</dbReference>
<dbReference type="Pfam" id="PF00579">
    <property type="entry name" value="tRNA-synt_1b"/>
    <property type="match status" value="1"/>
</dbReference>
<dbReference type="PRINTS" id="PR01040">
    <property type="entry name" value="TRNASYNTHTYR"/>
</dbReference>
<dbReference type="SMART" id="SM00363">
    <property type="entry name" value="S4"/>
    <property type="match status" value="1"/>
</dbReference>
<dbReference type="SUPFAM" id="SSF55174">
    <property type="entry name" value="Alpha-L RNA-binding motif"/>
    <property type="match status" value="1"/>
</dbReference>
<dbReference type="SUPFAM" id="SSF52374">
    <property type="entry name" value="Nucleotidylyl transferase"/>
    <property type="match status" value="1"/>
</dbReference>
<dbReference type="PROSITE" id="PS00178">
    <property type="entry name" value="AA_TRNA_LIGASE_I"/>
    <property type="match status" value="1"/>
</dbReference>
<dbReference type="PROSITE" id="PS50889">
    <property type="entry name" value="S4"/>
    <property type="match status" value="1"/>
</dbReference>
<accession>A9MEH2</accession>
<feature type="chain" id="PRO_1000088621" description="Tyrosine--tRNA ligase">
    <location>
        <begin position="1"/>
        <end position="428"/>
    </location>
</feature>
<feature type="domain" description="S4 RNA-binding" evidence="1">
    <location>
        <begin position="361"/>
        <end position="418"/>
    </location>
</feature>
<feature type="short sequence motif" description="'HIGH' region">
    <location>
        <begin position="46"/>
        <end position="55"/>
    </location>
</feature>
<feature type="short sequence motif" description="'KMSKS' region">
    <location>
        <begin position="239"/>
        <end position="243"/>
    </location>
</feature>
<feature type="binding site" evidence="1">
    <location>
        <position position="41"/>
    </location>
    <ligand>
        <name>L-tyrosine</name>
        <dbReference type="ChEBI" id="CHEBI:58315"/>
    </ligand>
</feature>
<feature type="binding site" evidence="1">
    <location>
        <position position="179"/>
    </location>
    <ligand>
        <name>L-tyrosine</name>
        <dbReference type="ChEBI" id="CHEBI:58315"/>
    </ligand>
</feature>
<feature type="binding site" evidence="1">
    <location>
        <position position="183"/>
    </location>
    <ligand>
        <name>L-tyrosine</name>
        <dbReference type="ChEBI" id="CHEBI:58315"/>
    </ligand>
</feature>
<feature type="binding site" evidence="1">
    <location>
        <position position="242"/>
    </location>
    <ligand>
        <name>ATP</name>
        <dbReference type="ChEBI" id="CHEBI:30616"/>
    </ligand>
</feature>
<evidence type="ECO:0000255" key="1">
    <source>
        <dbReference type="HAMAP-Rule" id="MF_02006"/>
    </source>
</evidence>
<organism>
    <name type="scientific">Salmonella arizonae (strain ATCC BAA-731 / CDC346-86 / RSK2980)</name>
    <dbReference type="NCBI Taxonomy" id="41514"/>
    <lineage>
        <taxon>Bacteria</taxon>
        <taxon>Pseudomonadati</taxon>
        <taxon>Pseudomonadota</taxon>
        <taxon>Gammaproteobacteria</taxon>
        <taxon>Enterobacterales</taxon>
        <taxon>Enterobacteriaceae</taxon>
        <taxon>Salmonella</taxon>
    </lineage>
</organism>
<keyword id="KW-0030">Aminoacyl-tRNA synthetase</keyword>
<keyword id="KW-0067">ATP-binding</keyword>
<keyword id="KW-0963">Cytoplasm</keyword>
<keyword id="KW-0436">Ligase</keyword>
<keyword id="KW-0547">Nucleotide-binding</keyword>
<keyword id="KW-0648">Protein biosynthesis</keyword>
<keyword id="KW-1185">Reference proteome</keyword>
<keyword id="KW-0694">RNA-binding</keyword>
<gene>
    <name evidence="1" type="primary">tyrS</name>
    <name type="ordered locus">SARI_01533</name>
</gene>
<comment type="function">
    <text evidence="1">Catalyzes the attachment of tyrosine to tRNA(Tyr) in a two-step reaction: tyrosine is first activated by ATP to form Tyr-AMP and then transferred to the acceptor end of tRNA(Tyr).</text>
</comment>
<comment type="catalytic activity">
    <reaction evidence="1">
        <text>tRNA(Tyr) + L-tyrosine + ATP = L-tyrosyl-tRNA(Tyr) + AMP + diphosphate + H(+)</text>
        <dbReference type="Rhea" id="RHEA:10220"/>
        <dbReference type="Rhea" id="RHEA-COMP:9706"/>
        <dbReference type="Rhea" id="RHEA-COMP:9707"/>
        <dbReference type="ChEBI" id="CHEBI:15378"/>
        <dbReference type="ChEBI" id="CHEBI:30616"/>
        <dbReference type="ChEBI" id="CHEBI:33019"/>
        <dbReference type="ChEBI" id="CHEBI:58315"/>
        <dbReference type="ChEBI" id="CHEBI:78442"/>
        <dbReference type="ChEBI" id="CHEBI:78536"/>
        <dbReference type="ChEBI" id="CHEBI:456215"/>
        <dbReference type="EC" id="6.1.1.1"/>
    </reaction>
</comment>
<comment type="subunit">
    <text evidence="1">Homodimer.</text>
</comment>
<comment type="subcellular location">
    <subcellularLocation>
        <location evidence="1">Cytoplasm</location>
    </subcellularLocation>
</comment>
<comment type="similarity">
    <text evidence="1">Belongs to the class-I aminoacyl-tRNA synthetase family. TyrS type 1 subfamily.</text>
</comment>
<reference key="1">
    <citation type="submission" date="2007-11" db="EMBL/GenBank/DDBJ databases">
        <authorList>
            <consortium name="The Salmonella enterica serovar Arizonae Genome Sequencing Project"/>
            <person name="McClelland M."/>
            <person name="Sanderson E.K."/>
            <person name="Porwollik S."/>
            <person name="Spieth J."/>
            <person name="Clifton W.S."/>
            <person name="Fulton R."/>
            <person name="Chunyan W."/>
            <person name="Wollam A."/>
            <person name="Shah N."/>
            <person name="Pepin K."/>
            <person name="Bhonagiri V."/>
            <person name="Nash W."/>
            <person name="Johnson M."/>
            <person name="Thiruvilangam P."/>
            <person name="Wilson R."/>
        </authorList>
    </citation>
    <scope>NUCLEOTIDE SEQUENCE [LARGE SCALE GENOMIC DNA]</scope>
    <source>
        <strain>ATCC BAA-731 / CDC346-86 / RSK2980</strain>
    </source>
</reference>
<protein>
    <recommendedName>
        <fullName evidence="1">Tyrosine--tRNA ligase</fullName>
        <ecNumber evidence="1">6.1.1.1</ecNumber>
    </recommendedName>
    <alternativeName>
        <fullName evidence="1">Tyrosyl-tRNA synthetase</fullName>
        <shortName evidence="1">TyrRS</shortName>
    </alternativeName>
</protein>
<name>SYY_SALAR</name>